<dbReference type="EC" id="4.1.1.11" evidence="1"/>
<dbReference type="EMBL" id="CP000316">
    <property type="protein sequence ID" value="ABE42857.1"/>
    <property type="molecule type" value="Genomic_DNA"/>
</dbReference>
<dbReference type="RefSeq" id="WP_011481859.1">
    <property type="nucleotide sequence ID" value="NC_007948.1"/>
</dbReference>
<dbReference type="SMR" id="Q12F35"/>
<dbReference type="STRING" id="296591.Bpro_0901"/>
<dbReference type="KEGG" id="pol:Bpro_0901"/>
<dbReference type="eggNOG" id="COG0853">
    <property type="taxonomic scope" value="Bacteria"/>
</dbReference>
<dbReference type="HOGENOM" id="CLU_115305_2_1_4"/>
<dbReference type="OrthoDB" id="9803983at2"/>
<dbReference type="UniPathway" id="UPA00028">
    <property type="reaction ID" value="UER00002"/>
</dbReference>
<dbReference type="Proteomes" id="UP000001983">
    <property type="component" value="Chromosome"/>
</dbReference>
<dbReference type="GO" id="GO:0005829">
    <property type="term" value="C:cytosol"/>
    <property type="evidence" value="ECO:0007669"/>
    <property type="project" value="TreeGrafter"/>
</dbReference>
<dbReference type="GO" id="GO:0004068">
    <property type="term" value="F:aspartate 1-decarboxylase activity"/>
    <property type="evidence" value="ECO:0007669"/>
    <property type="project" value="UniProtKB-UniRule"/>
</dbReference>
<dbReference type="GO" id="GO:0006523">
    <property type="term" value="P:alanine biosynthetic process"/>
    <property type="evidence" value="ECO:0007669"/>
    <property type="project" value="InterPro"/>
</dbReference>
<dbReference type="GO" id="GO:0015940">
    <property type="term" value="P:pantothenate biosynthetic process"/>
    <property type="evidence" value="ECO:0007669"/>
    <property type="project" value="UniProtKB-UniRule"/>
</dbReference>
<dbReference type="CDD" id="cd06919">
    <property type="entry name" value="Asp_decarbox"/>
    <property type="match status" value="1"/>
</dbReference>
<dbReference type="Gene3D" id="2.40.40.20">
    <property type="match status" value="1"/>
</dbReference>
<dbReference type="HAMAP" id="MF_00446">
    <property type="entry name" value="PanD"/>
    <property type="match status" value="1"/>
</dbReference>
<dbReference type="InterPro" id="IPR009010">
    <property type="entry name" value="Asp_de-COase-like_dom_sf"/>
</dbReference>
<dbReference type="InterPro" id="IPR003190">
    <property type="entry name" value="Asp_decarbox"/>
</dbReference>
<dbReference type="NCBIfam" id="TIGR00223">
    <property type="entry name" value="panD"/>
    <property type="match status" value="1"/>
</dbReference>
<dbReference type="PANTHER" id="PTHR21012">
    <property type="entry name" value="ASPARTATE 1-DECARBOXYLASE"/>
    <property type="match status" value="1"/>
</dbReference>
<dbReference type="PANTHER" id="PTHR21012:SF0">
    <property type="entry name" value="ASPARTATE 1-DECARBOXYLASE"/>
    <property type="match status" value="1"/>
</dbReference>
<dbReference type="Pfam" id="PF02261">
    <property type="entry name" value="Asp_decarbox"/>
    <property type="match status" value="1"/>
</dbReference>
<dbReference type="PIRSF" id="PIRSF006246">
    <property type="entry name" value="Asp_decarbox"/>
    <property type="match status" value="1"/>
</dbReference>
<dbReference type="SUPFAM" id="SSF50692">
    <property type="entry name" value="ADC-like"/>
    <property type="match status" value="1"/>
</dbReference>
<comment type="function">
    <text evidence="1">Catalyzes the pyruvoyl-dependent decarboxylation of aspartate to produce beta-alanine.</text>
</comment>
<comment type="catalytic activity">
    <reaction evidence="1">
        <text>L-aspartate + H(+) = beta-alanine + CO2</text>
        <dbReference type="Rhea" id="RHEA:19497"/>
        <dbReference type="ChEBI" id="CHEBI:15378"/>
        <dbReference type="ChEBI" id="CHEBI:16526"/>
        <dbReference type="ChEBI" id="CHEBI:29991"/>
        <dbReference type="ChEBI" id="CHEBI:57966"/>
        <dbReference type="EC" id="4.1.1.11"/>
    </reaction>
</comment>
<comment type="cofactor">
    <cofactor evidence="1">
        <name>pyruvate</name>
        <dbReference type="ChEBI" id="CHEBI:15361"/>
    </cofactor>
    <text evidence="1">Binds 1 pyruvoyl group covalently per subunit.</text>
</comment>
<comment type="pathway">
    <text evidence="1">Cofactor biosynthesis; (R)-pantothenate biosynthesis; beta-alanine from L-aspartate: step 1/1.</text>
</comment>
<comment type="subunit">
    <text evidence="1">Heterooctamer of four alpha and four beta subunits.</text>
</comment>
<comment type="subcellular location">
    <subcellularLocation>
        <location evidence="1">Cytoplasm</location>
    </subcellularLocation>
</comment>
<comment type="PTM">
    <text evidence="1">Is synthesized initially as an inactive proenzyme, which is activated by self-cleavage at a specific serine bond to produce a beta-subunit with a hydroxyl group at its C-terminus and an alpha-subunit with a pyruvoyl group at its N-terminus.</text>
</comment>
<comment type="similarity">
    <text evidence="1">Belongs to the PanD family.</text>
</comment>
<name>PAND1_POLSJ</name>
<reference key="1">
    <citation type="journal article" date="2008" name="Appl. Environ. Microbiol.">
        <title>The genome of Polaromonas sp. strain JS666: insights into the evolution of a hydrocarbon- and xenobiotic-degrading bacterium, and features of relevance to biotechnology.</title>
        <authorList>
            <person name="Mattes T.E."/>
            <person name="Alexander A.K."/>
            <person name="Richardson P.M."/>
            <person name="Munk A.C."/>
            <person name="Han C.S."/>
            <person name="Stothard P."/>
            <person name="Coleman N.V."/>
        </authorList>
    </citation>
    <scope>NUCLEOTIDE SEQUENCE [LARGE SCALE GENOMIC DNA]</scope>
    <source>
        <strain>JS666 / ATCC BAA-500</strain>
    </source>
</reference>
<evidence type="ECO:0000255" key="1">
    <source>
        <dbReference type="HAMAP-Rule" id="MF_00446"/>
    </source>
</evidence>
<feature type="chain" id="PRO_0000307047" description="Aspartate 1-decarboxylase beta chain" evidence="1">
    <location>
        <begin position="1"/>
        <end position="24"/>
    </location>
</feature>
<feature type="chain" id="PRO_0000307048" description="Aspartate 1-decarboxylase alpha chain" evidence="1">
    <location>
        <begin position="25"/>
        <end position="126"/>
    </location>
</feature>
<feature type="active site" description="Schiff-base intermediate with substrate; via pyruvic acid" evidence="1">
    <location>
        <position position="25"/>
    </location>
</feature>
<feature type="active site" description="Proton donor" evidence="1">
    <location>
        <position position="58"/>
    </location>
</feature>
<feature type="binding site" evidence="1">
    <location>
        <position position="57"/>
    </location>
    <ligand>
        <name>substrate</name>
    </ligand>
</feature>
<feature type="binding site" evidence="1">
    <location>
        <begin position="73"/>
        <end position="75"/>
    </location>
    <ligand>
        <name>substrate</name>
    </ligand>
</feature>
<feature type="modified residue" description="Pyruvic acid (Ser)" evidence="1">
    <location>
        <position position="25"/>
    </location>
</feature>
<sequence length="126" mass="14137">MFRTLLKSKIHRASVTHCELNYEGSCAIDEDLLDAANLGENEQVHIWNINNGERFITYAIRAERGSRIISVNGSAARRAAVGDLVIIAAFAQVHEEYVAGFRPKLVFVDPDNRIKEERSTIPVQMP</sequence>
<organism>
    <name type="scientific">Polaromonas sp. (strain JS666 / ATCC BAA-500)</name>
    <dbReference type="NCBI Taxonomy" id="296591"/>
    <lineage>
        <taxon>Bacteria</taxon>
        <taxon>Pseudomonadati</taxon>
        <taxon>Pseudomonadota</taxon>
        <taxon>Betaproteobacteria</taxon>
        <taxon>Burkholderiales</taxon>
        <taxon>Comamonadaceae</taxon>
        <taxon>Polaromonas</taxon>
    </lineage>
</organism>
<keyword id="KW-0068">Autocatalytic cleavage</keyword>
<keyword id="KW-0963">Cytoplasm</keyword>
<keyword id="KW-0210">Decarboxylase</keyword>
<keyword id="KW-0456">Lyase</keyword>
<keyword id="KW-0566">Pantothenate biosynthesis</keyword>
<keyword id="KW-0670">Pyruvate</keyword>
<keyword id="KW-1185">Reference proteome</keyword>
<keyword id="KW-0704">Schiff base</keyword>
<keyword id="KW-0865">Zymogen</keyword>
<accession>Q12F35</accession>
<gene>
    <name evidence="1" type="primary">panD1</name>
    <name type="ordered locus">Bpro_0901</name>
</gene>
<protein>
    <recommendedName>
        <fullName evidence="1">Aspartate 1-decarboxylase 1</fullName>
        <ecNumber evidence="1">4.1.1.11</ecNumber>
    </recommendedName>
    <alternativeName>
        <fullName evidence="1">Aspartate alpha-decarboxylase 1</fullName>
    </alternativeName>
    <component>
        <recommendedName>
            <fullName evidence="1">Aspartate 1-decarboxylase beta chain</fullName>
        </recommendedName>
    </component>
    <component>
        <recommendedName>
            <fullName evidence="1">Aspartate 1-decarboxylase alpha chain</fullName>
        </recommendedName>
    </component>
</protein>
<proteinExistence type="inferred from homology"/>